<keyword id="KW-0067">ATP-binding</keyword>
<keyword id="KW-0997">Cell inner membrane</keyword>
<keyword id="KW-1003">Cell membrane</keyword>
<keyword id="KW-0963">Cytoplasm</keyword>
<keyword id="KW-0472">Membrane</keyword>
<keyword id="KW-0479">Metal-binding</keyword>
<keyword id="KW-0547">Nucleotide-binding</keyword>
<keyword id="KW-0653">Protein transport</keyword>
<keyword id="KW-1278">Translocase</keyword>
<keyword id="KW-0811">Translocation</keyword>
<keyword id="KW-0813">Transport</keyword>
<keyword id="KW-0862">Zinc</keyword>
<name>SECA_BUCAT</name>
<organism>
    <name type="scientific">Buchnera aphidicola subsp. Acyrthosiphon pisum (strain Tuc7)</name>
    <dbReference type="NCBI Taxonomy" id="561501"/>
    <lineage>
        <taxon>Bacteria</taxon>
        <taxon>Pseudomonadati</taxon>
        <taxon>Pseudomonadota</taxon>
        <taxon>Gammaproteobacteria</taxon>
        <taxon>Enterobacterales</taxon>
        <taxon>Erwiniaceae</taxon>
        <taxon>Buchnera</taxon>
    </lineage>
</organism>
<protein>
    <recommendedName>
        <fullName evidence="1">Protein translocase subunit SecA</fullName>
        <ecNumber evidence="1">7.4.2.8</ecNumber>
    </recommendedName>
</protein>
<gene>
    <name evidence="1" type="primary">secA</name>
    <name type="ordered locus">BUAPTUC7_200</name>
</gene>
<feature type="chain" id="PRO_1000184220" description="Protein translocase subunit SecA">
    <location>
        <begin position="1"/>
        <end position="875"/>
    </location>
</feature>
<feature type="binding site" evidence="1">
    <location>
        <position position="87"/>
    </location>
    <ligand>
        <name>ATP</name>
        <dbReference type="ChEBI" id="CHEBI:30616"/>
    </ligand>
</feature>
<feature type="binding site" evidence="1">
    <location>
        <begin position="105"/>
        <end position="109"/>
    </location>
    <ligand>
        <name>ATP</name>
        <dbReference type="ChEBI" id="CHEBI:30616"/>
    </ligand>
</feature>
<feature type="binding site" evidence="1">
    <location>
        <position position="512"/>
    </location>
    <ligand>
        <name>ATP</name>
        <dbReference type="ChEBI" id="CHEBI:30616"/>
    </ligand>
</feature>
<feature type="binding site" evidence="1">
    <location>
        <position position="860"/>
    </location>
    <ligand>
        <name>Zn(2+)</name>
        <dbReference type="ChEBI" id="CHEBI:29105"/>
    </ligand>
</feature>
<feature type="binding site" evidence="1">
    <location>
        <position position="862"/>
    </location>
    <ligand>
        <name>Zn(2+)</name>
        <dbReference type="ChEBI" id="CHEBI:29105"/>
    </ligand>
</feature>
<feature type="binding site" evidence="1">
    <location>
        <position position="871"/>
    </location>
    <ligand>
        <name>Zn(2+)</name>
        <dbReference type="ChEBI" id="CHEBI:29105"/>
    </ligand>
</feature>
<feature type="binding site" evidence="1">
    <location>
        <position position="872"/>
    </location>
    <ligand>
        <name>Zn(2+)</name>
        <dbReference type="ChEBI" id="CHEBI:29105"/>
    </ligand>
</feature>
<proteinExistence type="inferred from homology"/>
<reference key="1">
    <citation type="journal article" date="2009" name="Science">
        <title>The dynamics and time scale of ongoing genomic erosion in symbiotic bacteria.</title>
        <authorList>
            <person name="Moran N.A."/>
            <person name="McLaughlin H.J."/>
            <person name="Sorek R."/>
        </authorList>
    </citation>
    <scope>NUCLEOTIDE SEQUENCE [LARGE SCALE GENOMIC DNA]</scope>
    <source>
        <strain>Tuc7</strain>
    </source>
</reference>
<accession>B8D7A5</accession>
<sequence length="875" mass="100902">MLIQFLTKIFSNHNNRILKKFKKIVLSVNKLEKNFEKLSDKELQAQTELFRLRLRNGETLDDILPEAFALVREASKRVFSMRHFDVQILGGIALNKQCIAEMRTGEGKTLTSTLPAYLNALNGKGVHIVTMNDYLARRDAEKNTPLFEFLGLTVGLNLSEMSFFSKRKAYLSDITYGTNNEYGFDYLRDNMVFSPEERVQRKLNYALVDEVDSILIDEARTPLIISGPSEDSSELYKEINKIVPFLNSQKKEDSDIFCGTGDFSIDEKSKQIYLTERGLIKVEKILFDKKLMNTGESLYSSNNIILMHHVLSALRAHKLFVRNVDYLVKDNSVIIVDEHTGRTMPGRRWSDGLHQAIEAKENVSIKNENQTLASITFQNYFRLYEKIAGMTGTAETESFEFNSIYNLDTIVIPTNRKMIRKDFPDLVYMTEKEKINAIIQDIQKCIKLNQPVLVGTVSIEKSEIISKELLKLNINHNVLNAKFHAKEAEIIAQAGKPGSITIATNMAGRGTDIVLGGNLEVELNKYKNITSRKIEEIKKKWQSEHDLVVSAGGLHIIGTERHESRRIDNQLRGRSGRQGDTGSSRFYLSMEDSLMRIFASDKIVHMMKKLGLAFNEAIEHSWVTKAIENAQKKVENRNFDIRKQLLEYDDVINEQRSAIYSQRNKLIDARDIKLMIYDIFKDVLKKNIILYIPKNTFHDKWNITDLKDKLNIDFYLNAPILDWINIEPNLTDKKIIKRIIDFARINYKNKEILIGSNNMRIIEKIIMLQTLDSLWKEHLAAVDYLRQGIHLRGYAQKDPKQEYKRESFNMFSSMLELLKFEVVSFLSRINSSYAKKYIDLNKHLVITHNNTMKISRNSPCLCGSGKKYKYCHGSL</sequence>
<comment type="function">
    <text evidence="1">Part of the Sec protein translocase complex. Interacts with the SecYEG preprotein conducting channel. Has a central role in coupling the hydrolysis of ATP to the transfer of proteins into and across the cell membrane, serving both as a receptor for the preprotein-SecB complex and as an ATP-driven molecular motor driving the stepwise translocation of polypeptide chains across the membrane.</text>
</comment>
<comment type="catalytic activity">
    <reaction evidence="1">
        <text>ATP + H2O + cellular proteinSide 1 = ADP + phosphate + cellular proteinSide 2.</text>
        <dbReference type="EC" id="7.4.2.8"/>
    </reaction>
</comment>
<comment type="cofactor">
    <cofactor evidence="1">
        <name>Zn(2+)</name>
        <dbReference type="ChEBI" id="CHEBI:29105"/>
    </cofactor>
    <text evidence="1">May bind 1 zinc ion per subunit.</text>
</comment>
<comment type="subunit">
    <text evidence="1">Monomer and homodimer. Part of the essential Sec protein translocation apparatus which comprises SecA, SecYEG and auxiliary proteins SecDF-YajC and YidC.</text>
</comment>
<comment type="subcellular location">
    <subcellularLocation>
        <location evidence="1">Cell inner membrane</location>
        <topology evidence="1">Peripheral membrane protein</topology>
        <orientation evidence="1">Cytoplasmic side</orientation>
    </subcellularLocation>
    <subcellularLocation>
        <location evidence="1">Cytoplasm</location>
    </subcellularLocation>
    <text evidence="1">Distribution is 50-50.</text>
</comment>
<comment type="induction">
    <text evidence="1">Repressed under conditions of excess protein secretion capacity and derepressed when protein secretion becomes limiting. This is regulated by SecM.</text>
</comment>
<comment type="similarity">
    <text evidence="1">Belongs to the SecA family.</text>
</comment>
<dbReference type="EC" id="7.4.2.8" evidence="1"/>
<dbReference type="EMBL" id="CP001158">
    <property type="protein sequence ID" value="ACL30020.1"/>
    <property type="molecule type" value="Genomic_DNA"/>
</dbReference>
<dbReference type="RefSeq" id="WP_010895999.1">
    <property type="nucleotide sequence ID" value="NC_011834.1"/>
</dbReference>
<dbReference type="SMR" id="B8D7A5"/>
<dbReference type="KEGG" id="bau:BUAPTUC7_200"/>
<dbReference type="HOGENOM" id="CLU_005314_3_0_6"/>
<dbReference type="GO" id="GO:0031522">
    <property type="term" value="C:cell envelope Sec protein transport complex"/>
    <property type="evidence" value="ECO:0007669"/>
    <property type="project" value="TreeGrafter"/>
</dbReference>
<dbReference type="GO" id="GO:0005829">
    <property type="term" value="C:cytosol"/>
    <property type="evidence" value="ECO:0007669"/>
    <property type="project" value="TreeGrafter"/>
</dbReference>
<dbReference type="GO" id="GO:0005886">
    <property type="term" value="C:plasma membrane"/>
    <property type="evidence" value="ECO:0007669"/>
    <property type="project" value="UniProtKB-SubCell"/>
</dbReference>
<dbReference type="GO" id="GO:0005524">
    <property type="term" value="F:ATP binding"/>
    <property type="evidence" value="ECO:0007669"/>
    <property type="project" value="UniProtKB-UniRule"/>
</dbReference>
<dbReference type="GO" id="GO:0046872">
    <property type="term" value="F:metal ion binding"/>
    <property type="evidence" value="ECO:0007669"/>
    <property type="project" value="UniProtKB-KW"/>
</dbReference>
<dbReference type="GO" id="GO:0008564">
    <property type="term" value="F:protein-exporting ATPase activity"/>
    <property type="evidence" value="ECO:0007669"/>
    <property type="project" value="UniProtKB-EC"/>
</dbReference>
<dbReference type="GO" id="GO:0065002">
    <property type="term" value="P:intracellular protein transmembrane transport"/>
    <property type="evidence" value="ECO:0007669"/>
    <property type="project" value="UniProtKB-UniRule"/>
</dbReference>
<dbReference type="GO" id="GO:0017038">
    <property type="term" value="P:protein import"/>
    <property type="evidence" value="ECO:0007669"/>
    <property type="project" value="InterPro"/>
</dbReference>
<dbReference type="GO" id="GO:0006605">
    <property type="term" value="P:protein targeting"/>
    <property type="evidence" value="ECO:0007669"/>
    <property type="project" value="UniProtKB-UniRule"/>
</dbReference>
<dbReference type="GO" id="GO:0043952">
    <property type="term" value="P:protein transport by the Sec complex"/>
    <property type="evidence" value="ECO:0007669"/>
    <property type="project" value="TreeGrafter"/>
</dbReference>
<dbReference type="CDD" id="cd17928">
    <property type="entry name" value="DEXDc_SecA"/>
    <property type="match status" value="1"/>
</dbReference>
<dbReference type="CDD" id="cd18803">
    <property type="entry name" value="SF2_C_secA"/>
    <property type="match status" value="1"/>
</dbReference>
<dbReference type="FunFam" id="3.40.50.300:FF:000113">
    <property type="entry name" value="Preprotein translocase subunit SecA"/>
    <property type="match status" value="1"/>
</dbReference>
<dbReference type="FunFam" id="3.90.1440.10:FF:000001">
    <property type="entry name" value="Preprotein translocase subunit SecA"/>
    <property type="match status" value="1"/>
</dbReference>
<dbReference type="FunFam" id="1.10.3060.10:FF:000003">
    <property type="entry name" value="Protein translocase subunit SecA"/>
    <property type="match status" value="1"/>
</dbReference>
<dbReference type="Gene3D" id="1.10.3060.10">
    <property type="entry name" value="Helical scaffold and wing domains of SecA"/>
    <property type="match status" value="1"/>
</dbReference>
<dbReference type="Gene3D" id="3.40.50.300">
    <property type="entry name" value="P-loop containing nucleotide triphosphate hydrolases"/>
    <property type="match status" value="2"/>
</dbReference>
<dbReference type="Gene3D" id="3.90.1440.10">
    <property type="entry name" value="SecA, preprotein cross-linking domain"/>
    <property type="match status" value="1"/>
</dbReference>
<dbReference type="HAMAP" id="MF_01382">
    <property type="entry name" value="SecA"/>
    <property type="match status" value="1"/>
</dbReference>
<dbReference type="InterPro" id="IPR014001">
    <property type="entry name" value="Helicase_ATP-bd"/>
</dbReference>
<dbReference type="InterPro" id="IPR001650">
    <property type="entry name" value="Helicase_C-like"/>
</dbReference>
<dbReference type="InterPro" id="IPR027417">
    <property type="entry name" value="P-loop_NTPase"/>
</dbReference>
<dbReference type="InterPro" id="IPR004027">
    <property type="entry name" value="SEC_C_motif"/>
</dbReference>
<dbReference type="InterPro" id="IPR000185">
    <property type="entry name" value="SecA"/>
</dbReference>
<dbReference type="InterPro" id="IPR020937">
    <property type="entry name" value="SecA_CS"/>
</dbReference>
<dbReference type="InterPro" id="IPR011115">
    <property type="entry name" value="SecA_DEAD"/>
</dbReference>
<dbReference type="InterPro" id="IPR014018">
    <property type="entry name" value="SecA_motor_DEAD"/>
</dbReference>
<dbReference type="InterPro" id="IPR011130">
    <property type="entry name" value="SecA_preprotein_X-link_dom"/>
</dbReference>
<dbReference type="InterPro" id="IPR044722">
    <property type="entry name" value="SecA_SF2_C"/>
</dbReference>
<dbReference type="InterPro" id="IPR011116">
    <property type="entry name" value="SecA_Wing/Scaffold"/>
</dbReference>
<dbReference type="InterPro" id="IPR036266">
    <property type="entry name" value="SecA_Wing/Scaffold_sf"/>
</dbReference>
<dbReference type="InterPro" id="IPR036670">
    <property type="entry name" value="SecA_X-link_sf"/>
</dbReference>
<dbReference type="NCBIfam" id="NF009538">
    <property type="entry name" value="PRK12904.1"/>
    <property type="match status" value="1"/>
</dbReference>
<dbReference type="NCBIfam" id="TIGR00963">
    <property type="entry name" value="secA"/>
    <property type="match status" value="1"/>
</dbReference>
<dbReference type="PANTHER" id="PTHR30612:SF0">
    <property type="entry name" value="CHLOROPLAST PROTEIN-TRANSPORTING ATPASE"/>
    <property type="match status" value="1"/>
</dbReference>
<dbReference type="PANTHER" id="PTHR30612">
    <property type="entry name" value="SECA INNER MEMBRANE COMPONENT OF SEC PROTEIN SECRETION SYSTEM"/>
    <property type="match status" value="1"/>
</dbReference>
<dbReference type="Pfam" id="PF21090">
    <property type="entry name" value="P-loop_SecA"/>
    <property type="match status" value="1"/>
</dbReference>
<dbReference type="Pfam" id="PF02810">
    <property type="entry name" value="SEC-C"/>
    <property type="match status" value="1"/>
</dbReference>
<dbReference type="Pfam" id="PF07517">
    <property type="entry name" value="SecA_DEAD"/>
    <property type="match status" value="1"/>
</dbReference>
<dbReference type="Pfam" id="PF01043">
    <property type="entry name" value="SecA_PP_bind"/>
    <property type="match status" value="1"/>
</dbReference>
<dbReference type="Pfam" id="PF07516">
    <property type="entry name" value="SecA_SW"/>
    <property type="match status" value="1"/>
</dbReference>
<dbReference type="PRINTS" id="PR00906">
    <property type="entry name" value="SECA"/>
</dbReference>
<dbReference type="SMART" id="SM00957">
    <property type="entry name" value="SecA_DEAD"/>
    <property type="match status" value="1"/>
</dbReference>
<dbReference type="SMART" id="SM00958">
    <property type="entry name" value="SecA_PP_bind"/>
    <property type="match status" value="1"/>
</dbReference>
<dbReference type="SUPFAM" id="SSF81886">
    <property type="entry name" value="Helical scaffold and wing domains of SecA"/>
    <property type="match status" value="1"/>
</dbReference>
<dbReference type="SUPFAM" id="SSF52540">
    <property type="entry name" value="P-loop containing nucleoside triphosphate hydrolases"/>
    <property type="match status" value="2"/>
</dbReference>
<dbReference type="SUPFAM" id="SSF81767">
    <property type="entry name" value="Pre-protein crosslinking domain of SecA"/>
    <property type="match status" value="1"/>
</dbReference>
<dbReference type="PROSITE" id="PS01312">
    <property type="entry name" value="SECA"/>
    <property type="match status" value="1"/>
</dbReference>
<dbReference type="PROSITE" id="PS51196">
    <property type="entry name" value="SECA_MOTOR_DEAD"/>
    <property type="match status" value="1"/>
</dbReference>
<evidence type="ECO:0000255" key="1">
    <source>
        <dbReference type="HAMAP-Rule" id="MF_01382"/>
    </source>
</evidence>